<dbReference type="EMBL" id="AE005174">
    <property type="protein sequence ID" value="AAG56584.1"/>
    <property type="status" value="ALT_INIT"/>
    <property type="molecule type" value="Genomic_DNA"/>
</dbReference>
<dbReference type="EMBL" id="BA000007">
    <property type="protein sequence ID" value="BAB35726.2"/>
    <property type="molecule type" value="Genomic_DNA"/>
</dbReference>
<dbReference type="PIR" id="D85765">
    <property type="entry name" value="D85765"/>
</dbReference>
<dbReference type="PIR" id="G90916">
    <property type="entry name" value="G90916"/>
</dbReference>
<dbReference type="RefSeq" id="NP_310330.2">
    <property type="nucleotide sequence ID" value="NC_002695.1"/>
</dbReference>
<dbReference type="RefSeq" id="WP_001414237.1">
    <property type="nucleotide sequence ID" value="NZ_VOAI01000007.1"/>
</dbReference>
<dbReference type="STRING" id="155864.Z2591"/>
<dbReference type="KEGG" id="ece:Z2591"/>
<dbReference type="KEGG" id="ecs:ECs_2303"/>
<dbReference type="PATRIC" id="fig|386585.9.peg.2412"/>
<dbReference type="eggNOG" id="ENOG5032U9T">
    <property type="taxonomic scope" value="Bacteria"/>
</dbReference>
<dbReference type="HOGENOM" id="CLU_102486_2_0_6"/>
<dbReference type="Proteomes" id="UP000000558">
    <property type="component" value="Chromosome"/>
</dbReference>
<dbReference type="Proteomes" id="UP000002519">
    <property type="component" value="Chromosome"/>
</dbReference>
<dbReference type="GO" id="GO:0042597">
    <property type="term" value="C:periplasmic space"/>
    <property type="evidence" value="ECO:0007669"/>
    <property type="project" value="UniProtKB-SubCell"/>
</dbReference>
<dbReference type="HAMAP" id="MF_00546">
    <property type="entry name" value="Asr"/>
    <property type="match status" value="1"/>
</dbReference>
<dbReference type="InterPro" id="IPR023497">
    <property type="entry name" value="Acid_shock"/>
</dbReference>
<dbReference type="NCBIfam" id="NF033636">
    <property type="entry name" value="acid_shock_Asr"/>
    <property type="match status" value="1"/>
</dbReference>
<dbReference type="Pfam" id="PF06392">
    <property type="entry name" value="Asr"/>
    <property type="match status" value="1"/>
</dbReference>
<comment type="function">
    <text evidence="1">Required for growth and/or survival at acidic conditions.</text>
</comment>
<comment type="subcellular location">
    <subcellularLocation>
        <location evidence="1">Periplasm</location>
    </subcellularLocation>
</comment>
<comment type="PTM">
    <text evidence="1">Proteolytic processing gives rise to the active protein.</text>
</comment>
<comment type="similarity">
    <text evidence="3">Belongs to the Asr family.</text>
</comment>
<comment type="sequence caution" evidence="3">
    <conflict type="erroneous initiation">
        <sequence resource="EMBL-CDS" id="AAG56584"/>
    </conflict>
    <text>Extended N-terminus.</text>
</comment>
<reference key="1">
    <citation type="journal article" date="2001" name="Nature">
        <title>Genome sequence of enterohaemorrhagic Escherichia coli O157:H7.</title>
        <authorList>
            <person name="Perna N.T."/>
            <person name="Plunkett G. III"/>
            <person name="Burland V."/>
            <person name="Mau B."/>
            <person name="Glasner J.D."/>
            <person name="Rose D.J."/>
            <person name="Mayhew G.F."/>
            <person name="Evans P.S."/>
            <person name="Gregor J."/>
            <person name="Kirkpatrick H.A."/>
            <person name="Posfai G."/>
            <person name="Hackett J."/>
            <person name="Klink S."/>
            <person name="Boutin A."/>
            <person name="Shao Y."/>
            <person name="Miller L."/>
            <person name="Grotbeck E.J."/>
            <person name="Davis N.W."/>
            <person name="Lim A."/>
            <person name="Dimalanta E.T."/>
            <person name="Potamousis K."/>
            <person name="Apodaca J."/>
            <person name="Anantharaman T.S."/>
            <person name="Lin J."/>
            <person name="Yen G."/>
            <person name="Schwartz D.C."/>
            <person name="Welch R.A."/>
            <person name="Blattner F.R."/>
        </authorList>
    </citation>
    <scope>NUCLEOTIDE SEQUENCE [LARGE SCALE GENOMIC DNA]</scope>
    <source>
        <strain>O157:H7 / EDL933 / ATCC 700927 / EHEC</strain>
    </source>
</reference>
<reference key="2">
    <citation type="journal article" date="2001" name="DNA Res.">
        <title>Complete genome sequence of enterohemorrhagic Escherichia coli O157:H7 and genomic comparison with a laboratory strain K-12.</title>
        <authorList>
            <person name="Hayashi T."/>
            <person name="Makino K."/>
            <person name="Ohnishi M."/>
            <person name="Kurokawa K."/>
            <person name="Ishii K."/>
            <person name="Yokoyama K."/>
            <person name="Han C.-G."/>
            <person name="Ohtsubo E."/>
            <person name="Nakayama K."/>
            <person name="Murata T."/>
            <person name="Tanaka M."/>
            <person name="Tobe T."/>
            <person name="Iida T."/>
            <person name="Takami H."/>
            <person name="Honda T."/>
            <person name="Sasakawa C."/>
            <person name="Ogasawara N."/>
            <person name="Yasunaga T."/>
            <person name="Kuhara S."/>
            <person name="Shiba T."/>
            <person name="Hattori M."/>
            <person name="Shinagawa H."/>
        </authorList>
    </citation>
    <scope>NUCLEOTIDE SEQUENCE [LARGE SCALE GENOMIC DNA]</scope>
    <source>
        <strain>O157:H7 / Sakai / RIMD 0509952 / EHEC</strain>
    </source>
</reference>
<name>ASR_ECO57</name>
<keyword id="KW-0574">Periplasm</keyword>
<keyword id="KW-1185">Reference proteome</keyword>
<keyword id="KW-0732">Signal</keyword>
<protein>
    <recommendedName>
        <fullName>Acid shock protein</fullName>
    </recommendedName>
</protein>
<organism>
    <name type="scientific">Escherichia coli O157:H7</name>
    <dbReference type="NCBI Taxonomy" id="83334"/>
    <lineage>
        <taxon>Bacteria</taxon>
        <taxon>Pseudomonadati</taxon>
        <taxon>Pseudomonadota</taxon>
        <taxon>Gammaproteobacteria</taxon>
        <taxon>Enterobacterales</taxon>
        <taxon>Enterobacteriaceae</taxon>
        <taxon>Escherichia</taxon>
    </lineage>
</organism>
<gene>
    <name type="primary">asr</name>
    <name type="ordered locus">Z2591</name>
    <name type="ordered locus">ECs2303</name>
</gene>
<accession>Q8X783</accession>
<evidence type="ECO:0000250" key="1"/>
<evidence type="ECO:0000256" key="2">
    <source>
        <dbReference type="SAM" id="MobiDB-lite"/>
    </source>
</evidence>
<evidence type="ECO:0000305" key="3"/>
<proteinExistence type="inferred from homology"/>
<sequence length="102" mass="10561">MKKVLALVVAAAMGLSSAAFAAETATTPAPTATTTKAAPAKTTHHKKQHKAAPAQKAQAAKKHHKNTKAEQKAPEQKAQAAKKHAKKHSHQQPAKPAAQPAA</sequence>
<feature type="signal peptide" evidence="1">
    <location>
        <begin position="1"/>
        <end position="21"/>
    </location>
</feature>
<feature type="propeptide" id="PRO_0000269505" evidence="1">
    <location>
        <begin position="22"/>
        <end position="58"/>
    </location>
</feature>
<feature type="chain" id="PRO_0000002404" description="Acid shock protein">
    <location>
        <begin position="59"/>
        <end position="102"/>
    </location>
</feature>
<feature type="region of interest" description="Disordered" evidence="2">
    <location>
        <begin position="22"/>
        <end position="102"/>
    </location>
</feature>
<feature type="compositionally biased region" description="Low complexity" evidence="2">
    <location>
        <begin position="22"/>
        <end position="41"/>
    </location>
</feature>
<feature type="compositionally biased region" description="Basic residues" evidence="2">
    <location>
        <begin position="80"/>
        <end position="90"/>
    </location>
</feature>
<feature type="compositionally biased region" description="Low complexity" evidence="2">
    <location>
        <begin position="91"/>
        <end position="102"/>
    </location>
</feature>